<feature type="chain" id="PRO_1000191114" description="Methenyltetrahydromethanopterin cyclohydrolase">
    <location>
        <begin position="1"/>
        <end position="315"/>
    </location>
</feature>
<reference key="1">
    <citation type="journal article" date="2015" name="Genome Announc.">
        <title>Complete Genome Sequence of Methanosphaerula palustris E1-9CT, a Hydrogenotrophic Methanogen Isolated from a Minerotrophic Fen Peatland.</title>
        <authorList>
            <person name="Cadillo-Quiroz H."/>
            <person name="Browne P."/>
            <person name="Kyrpides N."/>
            <person name="Woyke T."/>
            <person name="Goodwin L."/>
            <person name="Detter C."/>
            <person name="Yavitt J.B."/>
            <person name="Zinder S.H."/>
        </authorList>
    </citation>
    <scope>NUCLEOTIDE SEQUENCE [LARGE SCALE GENOMIC DNA]</scope>
    <source>
        <strain>ATCC BAA-1556 / DSM 19958 / E1-9c</strain>
    </source>
</reference>
<protein>
    <recommendedName>
        <fullName evidence="1">Methenyltetrahydromethanopterin cyclohydrolase</fullName>
        <ecNumber evidence="1">3.5.4.27</ecNumber>
    </recommendedName>
    <alternativeName>
        <fullName evidence="1">Methenyl-H4MPT cyclohydrolase</fullName>
    </alternativeName>
</protein>
<comment type="function">
    <text evidence="1">Catalyzes the reversible interconversion of 5-formyl-H(4)MPT to methenyl-H(4)MPT(+).</text>
</comment>
<comment type="catalytic activity">
    <reaction evidence="1">
        <text>5,10-methenyl-5,6,7,8-tetrahydromethanopterin + H2O = N(5)-formyl-5,6,7,8-tetrahydromethanopterin + H(+)</text>
        <dbReference type="Rhea" id="RHEA:19053"/>
        <dbReference type="ChEBI" id="CHEBI:15377"/>
        <dbReference type="ChEBI" id="CHEBI:15378"/>
        <dbReference type="ChEBI" id="CHEBI:58018"/>
        <dbReference type="ChEBI" id="CHEBI:58337"/>
        <dbReference type="EC" id="3.5.4.27"/>
    </reaction>
</comment>
<comment type="pathway">
    <text evidence="1">One-carbon metabolism; methanogenesis from CO(2); 5,10-methenyl-5,6,7,8-tetrahydromethanopterin from CO(2): step 3/3.</text>
</comment>
<comment type="subcellular location">
    <subcellularLocation>
        <location evidence="1">Cytoplasm</location>
    </subcellularLocation>
</comment>
<comment type="similarity">
    <text evidence="1">Belongs to the MCH family.</text>
</comment>
<proteinExistence type="inferred from homology"/>
<name>MCH_METPE</name>
<sequence length="315" mass="33903">MLSVNELALEIFENLAEFAEEFNAAYHELGNGARIVDCGVSTRGGYSAGRAFTEICMGGLGEVNFRMGEISGIPMPFIDVNTDFPSISCLGAQKAGWTVKVGNYFAMGSGPARALALKPKHTYEVIGYEDDFDSAVIALESDHLPNGEVMEKIAAECHVDVGNVCAVVAPTASPVGSIQVSGRCVETAIYKLNELGFDTTKIISAIGSAPIPPVKKDATRAMGCTNDATIYHGRILLTMKAPEIKDYLDKIPSNKSKGYGKPFYDIFKEAEFDFYKIDTSLFSPAEVIINELTEGVVYHVGAVNPEVTLKSFGLL</sequence>
<dbReference type="EC" id="3.5.4.27" evidence="1"/>
<dbReference type="EMBL" id="CP001338">
    <property type="protein sequence ID" value="ACL17323.1"/>
    <property type="molecule type" value="Genomic_DNA"/>
</dbReference>
<dbReference type="RefSeq" id="WP_012618642.1">
    <property type="nucleotide sequence ID" value="NC_011832.1"/>
</dbReference>
<dbReference type="SMR" id="B8GDH2"/>
<dbReference type="STRING" id="521011.Mpal_2022"/>
<dbReference type="GeneID" id="7272003"/>
<dbReference type="KEGG" id="mpl:Mpal_2022"/>
<dbReference type="eggNOG" id="arCOG02675">
    <property type="taxonomic scope" value="Archaea"/>
</dbReference>
<dbReference type="HOGENOM" id="CLU_876031_0_0_2"/>
<dbReference type="OrthoDB" id="105468at2157"/>
<dbReference type="UniPathway" id="UPA00640">
    <property type="reaction ID" value="UER00694"/>
</dbReference>
<dbReference type="Proteomes" id="UP000002457">
    <property type="component" value="Chromosome"/>
</dbReference>
<dbReference type="GO" id="GO:0005737">
    <property type="term" value="C:cytoplasm"/>
    <property type="evidence" value="ECO:0007669"/>
    <property type="project" value="UniProtKB-SubCell"/>
</dbReference>
<dbReference type="GO" id="GO:0018759">
    <property type="term" value="F:methenyltetrahydromethanopterin cyclohydrolase activity"/>
    <property type="evidence" value="ECO:0007669"/>
    <property type="project" value="UniProtKB-UniRule"/>
</dbReference>
<dbReference type="GO" id="GO:0019386">
    <property type="term" value="P:methanogenesis, from carbon dioxide"/>
    <property type="evidence" value="ECO:0007669"/>
    <property type="project" value="UniProtKB-UniRule"/>
</dbReference>
<dbReference type="GO" id="GO:0006730">
    <property type="term" value="P:one-carbon metabolic process"/>
    <property type="evidence" value="ECO:0007669"/>
    <property type="project" value="UniProtKB-UniRule"/>
</dbReference>
<dbReference type="CDD" id="cd00545">
    <property type="entry name" value="MCH"/>
    <property type="match status" value="1"/>
</dbReference>
<dbReference type="Gene3D" id="3.10.340.11">
    <property type="entry name" value="Methenyltetrahydromethanopterin Cyclohydrolase, Chain A, domain 1"/>
    <property type="match status" value="1"/>
</dbReference>
<dbReference type="Gene3D" id="3.30.1030.10">
    <property type="entry name" value="Methenyltetrahydromethanopterin Cyclohydrolase, Chain A, domain 2"/>
    <property type="match status" value="1"/>
</dbReference>
<dbReference type="HAMAP" id="MF_00486">
    <property type="entry name" value="McH"/>
    <property type="match status" value="1"/>
</dbReference>
<dbReference type="InterPro" id="IPR003209">
    <property type="entry name" value="METHMP_CycHdrlase"/>
</dbReference>
<dbReference type="NCBIfam" id="TIGR03120">
    <property type="entry name" value="one_C_mch"/>
    <property type="match status" value="1"/>
</dbReference>
<dbReference type="Pfam" id="PF02289">
    <property type="entry name" value="MCH"/>
    <property type="match status" value="1"/>
</dbReference>
<dbReference type="SUPFAM" id="SSF56199">
    <property type="entry name" value="Methenyltetrahydromethanopterin cyclohydrolase"/>
    <property type="match status" value="1"/>
</dbReference>
<organism>
    <name type="scientific">Methanosphaerula palustris (strain ATCC BAA-1556 / DSM 19958 / E1-9c)</name>
    <dbReference type="NCBI Taxonomy" id="521011"/>
    <lineage>
        <taxon>Archaea</taxon>
        <taxon>Methanobacteriati</taxon>
        <taxon>Methanobacteriota</taxon>
        <taxon>Stenosarchaea group</taxon>
        <taxon>Methanomicrobia</taxon>
        <taxon>Methanomicrobiales</taxon>
        <taxon>Methanoregulaceae</taxon>
        <taxon>Methanosphaerula</taxon>
    </lineage>
</organism>
<evidence type="ECO:0000255" key="1">
    <source>
        <dbReference type="HAMAP-Rule" id="MF_00486"/>
    </source>
</evidence>
<gene>
    <name evidence="1" type="primary">mch</name>
    <name type="ordered locus">Mpal_2022</name>
</gene>
<keyword id="KW-0963">Cytoplasm</keyword>
<keyword id="KW-0378">Hydrolase</keyword>
<keyword id="KW-0484">Methanogenesis</keyword>
<keyword id="KW-0554">One-carbon metabolism</keyword>
<keyword id="KW-1185">Reference proteome</keyword>
<accession>B8GDH2</accession>